<accession>P0AB97</accession>
<accession>P37311</accession>
<organism>
    <name type="scientific">Shigella flexneri</name>
    <dbReference type="NCBI Taxonomy" id="623"/>
    <lineage>
        <taxon>Bacteria</taxon>
        <taxon>Pseudomonadati</taxon>
        <taxon>Pseudomonadota</taxon>
        <taxon>Gammaproteobacteria</taxon>
        <taxon>Enterobacterales</taxon>
        <taxon>Enterobacteriaceae</taxon>
        <taxon>Shigella</taxon>
    </lineage>
</organism>
<gene>
    <name type="primary">arsC</name>
    <name type="ordered locus">SF3536</name>
    <name type="ordered locus">S4234</name>
</gene>
<name>ARSC_SHIFL</name>
<evidence type="ECO:0000250" key="1">
    <source>
        <dbReference type="UniProtKB" id="P08692"/>
    </source>
</evidence>
<evidence type="ECO:0000255" key="2">
    <source>
        <dbReference type="PROSITE-ProRule" id="PRU01282"/>
    </source>
</evidence>
<evidence type="ECO:0000305" key="3"/>
<keyword id="KW-0059">Arsenical resistance</keyword>
<keyword id="KW-0560">Oxidoreductase</keyword>
<keyword id="KW-1185">Reference proteome</keyword>
<sequence length="141" mass="15853">MSNITIYHNPACGTSRNTLEMIRNSGTEPTIIHYLETPPTRDELVKLIADMGISVRALLRKNVEPYEELGLAEDKFTDDRLIDFMLQHPILINRPIVVTPLGTRLCRPSEVVLEILPDAQKGAFSKEDGEKVVDEAGKRLK</sequence>
<dbReference type="EC" id="1.20.4.1" evidence="1"/>
<dbReference type="EMBL" id="AE005674">
    <property type="protein sequence ID" value="AAN44992.1"/>
    <property type="molecule type" value="Genomic_DNA"/>
</dbReference>
<dbReference type="EMBL" id="AE014073">
    <property type="protein sequence ID" value="AAP19196.1"/>
    <property type="molecule type" value="Genomic_DNA"/>
</dbReference>
<dbReference type="RefSeq" id="NP_709285.1">
    <property type="nucleotide sequence ID" value="NC_004337.2"/>
</dbReference>
<dbReference type="RefSeq" id="WP_000065769.1">
    <property type="nucleotide sequence ID" value="NZ_WPGW01000284.1"/>
</dbReference>
<dbReference type="SMR" id="P0AB97"/>
<dbReference type="STRING" id="198214.SF3536"/>
<dbReference type="PaxDb" id="198214-SF3536"/>
<dbReference type="GeneID" id="1025373"/>
<dbReference type="GeneID" id="93778489"/>
<dbReference type="KEGG" id="sfl:SF3536"/>
<dbReference type="KEGG" id="sfx:S4234"/>
<dbReference type="PATRIC" id="fig|198214.7.peg.4164"/>
<dbReference type="HOGENOM" id="CLU_116644_0_0_6"/>
<dbReference type="Proteomes" id="UP000001006">
    <property type="component" value="Chromosome"/>
</dbReference>
<dbReference type="Proteomes" id="UP000002673">
    <property type="component" value="Chromosome"/>
</dbReference>
<dbReference type="GO" id="GO:0008794">
    <property type="term" value="F:arsenate reductase (glutaredoxin) activity"/>
    <property type="evidence" value="ECO:0007669"/>
    <property type="project" value="UniProtKB-EC"/>
</dbReference>
<dbReference type="GO" id="GO:0046685">
    <property type="term" value="P:response to arsenic-containing substance"/>
    <property type="evidence" value="ECO:0007669"/>
    <property type="project" value="UniProtKB-KW"/>
</dbReference>
<dbReference type="CDD" id="cd03034">
    <property type="entry name" value="ArsC_ArsC"/>
    <property type="match status" value="1"/>
</dbReference>
<dbReference type="FunFam" id="3.40.30.10:FF:000048">
    <property type="entry name" value="Arsenate reductase"/>
    <property type="match status" value="1"/>
</dbReference>
<dbReference type="Gene3D" id="3.40.30.10">
    <property type="entry name" value="Glutaredoxin"/>
    <property type="match status" value="1"/>
</dbReference>
<dbReference type="InterPro" id="IPR006659">
    <property type="entry name" value="Arsenate_reductase"/>
</dbReference>
<dbReference type="InterPro" id="IPR006660">
    <property type="entry name" value="Arsenate_reductase-like"/>
</dbReference>
<dbReference type="InterPro" id="IPR036249">
    <property type="entry name" value="Thioredoxin-like_sf"/>
</dbReference>
<dbReference type="NCBIfam" id="TIGR00014">
    <property type="entry name" value="arsC"/>
    <property type="match status" value="1"/>
</dbReference>
<dbReference type="NCBIfam" id="NF007456">
    <property type="entry name" value="PRK10026.1"/>
    <property type="match status" value="1"/>
</dbReference>
<dbReference type="PANTHER" id="PTHR30041">
    <property type="entry name" value="ARSENATE REDUCTASE"/>
    <property type="match status" value="1"/>
</dbReference>
<dbReference type="PANTHER" id="PTHR30041:SF5">
    <property type="entry name" value="ARSENATE REDUCTASE-RELATED"/>
    <property type="match status" value="1"/>
</dbReference>
<dbReference type="Pfam" id="PF03960">
    <property type="entry name" value="ArsC"/>
    <property type="match status" value="1"/>
</dbReference>
<dbReference type="SUPFAM" id="SSF52833">
    <property type="entry name" value="Thioredoxin-like"/>
    <property type="match status" value="1"/>
</dbReference>
<dbReference type="PROSITE" id="PS51353">
    <property type="entry name" value="ARSC"/>
    <property type="match status" value="1"/>
</dbReference>
<protein>
    <recommendedName>
        <fullName>Arsenate reductase</fullName>
        <ecNumber evidence="1">1.20.4.1</ecNumber>
    </recommendedName>
    <alternativeName>
        <fullName>Arsenical pump modifier</fullName>
    </alternativeName>
</protein>
<proteinExistence type="inferred from homology"/>
<reference key="1">
    <citation type="journal article" date="2002" name="Nucleic Acids Res.">
        <title>Genome sequence of Shigella flexneri 2a: insights into pathogenicity through comparison with genomes of Escherichia coli K12 and O157.</title>
        <authorList>
            <person name="Jin Q."/>
            <person name="Yuan Z."/>
            <person name="Xu J."/>
            <person name="Wang Y."/>
            <person name="Shen Y."/>
            <person name="Lu W."/>
            <person name="Wang J."/>
            <person name="Liu H."/>
            <person name="Yang J."/>
            <person name="Yang F."/>
            <person name="Zhang X."/>
            <person name="Zhang J."/>
            <person name="Yang G."/>
            <person name="Wu H."/>
            <person name="Qu D."/>
            <person name="Dong J."/>
            <person name="Sun L."/>
            <person name="Xue Y."/>
            <person name="Zhao A."/>
            <person name="Gao Y."/>
            <person name="Zhu J."/>
            <person name="Kan B."/>
            <person name="Ding K."/>
            <person name="Chen S."/>
            <person name="Cheng H."/>
            <person name="Yao Z."/>
            <person name="He B."/>
            <person name="Chen R."/>
            <person name="Ma D."/>
            <person name="Qiang B."/>
            <person name="Wen Y."/>
            <person name="Hou Y."/>
            <person name="Yu J."/>
        </authorList>
    </citation>
    <scope>NUCLEOTIDE SEQUENCE [LARGE SCALE GENOMIC DNA]</scope>
    <source>
        <strain>301 / Serotype 2a</strain>
    </source>
</reference>
<reference key="2">
    <citation type="journal article" date="2003" name="Infect. Immun.">
        <title>Complete genome sequence and comparative genomics of Shigella flexneri serotype 2a strain 2457T.</title>
        <authorList>
            <person name="Wei J."/>
            <person name="Goldberg M.B."/>
            <person name="Burland V."/>
            <person name="Venkatesan M.M."/>
            <person name="Deng W."/>
            <person name="Fournier G."/>
            <person name="Mayhew G.F."/>
            <person name="Plunkett G. III"/>
            <person name="Rose D.J."/>
            <person name="Darling A."/>
            <person name="Mau B."/>
            <person name="Perna N.T."/>
            <person name="Payne S.M."/>
            <person name="Runyen-Janecky L.J."/>
            <person name="Zhou S."/>
            <person name="Schwartz D.C."/>
            <person name="Blattner F.R."/>
        </authorList>
    </citation>
    <scope>NUCLEOTIDE SEQUENCE [LARGE SCALE GENOMIC DNA]</scope>
    <source>
        <strain>ATCC 700930 / 2457T / Serotype 2a</strain>
    </source>
</reference>
<feature type="chain" id="PRO_0000162543" description="Arsenate reductase">
    <location>
        <begin position="1"/>
        <end position="141"/>
    </location>
</feature>
<feature type="active site" description="Nucleophile; cysteine thioarsenate intermediate" evidence="1 2">
    <location>
        <position position="12"/>
    </location>
</feature>
<feature type="site" description="Important for activity" evidence="1">
    <location>
        <position position="8"/>
    </location>
</feature>
<feature type="site" description="Important for activity" evidence="1">
    <location>
        <position position="60"/>
    </location>
</feature>
<feature type="site" description="Important for activity" evidence="1">
    <location>
        <position position="94"/>
    </location>
</feature>
<feature type="site" description="Important for activity" evidence="1">
    <location>
        <position position="107"/>
    </location>
</feature>
<comment type="function">
    <text evidence="1">Involved in resistance to arsenate. Catalyzes the reduction of arsenate [As(V)] to arsenite [As(III)].</text>
</comment>
<comment type="catalytic activity">
    <reaction evidence="1">
        <text>[glutaredoxin]-dithiol + arsenate + glutathione + H(+) = glutathionyl-S-S-[glutaredoxin] + arsenite + H2O</text>
        <dbReference type="Rhea" id="RHEA:22016"/>
        <dbReference type="Rhea" id="RHEA-COMP:10729"/>
        <dbReference type="Rhea" id="RHEA-COMP:17668"/>
        <dbReference type="ChEBI" id="CHEBI:15377"/>
        <dbReference type="ChEBI" id="CHEBI:15378"/>
        <dbReference type="ChEBI" id="CHEBI:29242"/>
        <dbReference type="ChEBI" id="CHEBI:29950"/>
        <dbReference type="ChEBI" id="CHEBI:48597"/>
        <dbReference type="ChEBI" id="CHEBI:57925"/>
        <dbReference type="ChEBI" id="CHEBI:146199"/>
        <dbReference type="EC" id="1.20.4.1"/>
    </reaction>
</comment>
<comment type="similarity">
    <text evidence="3">Belongs to the ArsC family.</text>
</comment>